<feature type="chain" id="PRO_0000243166" description="Large ribosomal subunit protein uL22">
    <location>
        <begin position="1"/>
        <end position="110"/>
    </location>
</feature>
<protein>
    <recommendedName>
        <fullName evidence="1">Large ribosomal subunit protein uL22</fullName>
    </recommendedName>
    <alternativeName>
        <fullName evidence="2">50S ribosomal protein L22</fullName>
    </alternativeName>
</protein>
<keyword id="KW-0687">Ribonucleoprotein</keyword>
<keyword id="KW-0689">Ribosomal protein</keyword>
<keyword id="KW-0694">RNA-binding</keyword>
<keyword id="KW-0699">rRNA-binding</keyword>
<gene>
    <name evidence="1" type="primary">rplV</name>
    <name type="ordered locus">MS2043</name>
</gene>
<organism>
    <name type="scientific">Mannheimia succiniciproducens (strain KCTC 0769BP / MBEL55E)</name>
    <dbReference type="NCBI Taxonomy" id="221988"/>
    <lineage>
        <taxon>Bacteria</taxon>
        <taxon>Pseudomonadati</taxon>
        <taxon>Pseudomonadota</taxon>
        <taxon>Gammaproteobacteria</taxon>
        <taxon>Pasteurellales</taxon>
        <taxon>Pasteurellaceae</taxon>
        <taxon>Basfia</taxon>
    </lineage>
</organism>
<evidence type="ECO:0000255" key="1">
    <source>
        <dbReference type="HAMAP-Rule" id="MF_01331"/>
    </source>
</evidence>
<evidence type="ECO:0000305" key="2"/>
<name>RL22_MANSM</name>
<dbReference type="EMBL" id="AE016827">
    <property type="protein sequence ID" value="AAU38650.1"/>
    <property type="molecule type" value="Genomic_DNA"/>
</dbReference>
<dbReference type="RefSeq" id="WP_011201200.1">
    <property type="nucleotide sequence ID" value="NC_006300.1"/>
</dbReference>
<dbReference type="SMR" id="Q65QW0"/>
<dbReference type="STRING" id="221988.MS2043"/>
<dbReference type="KEGG" id="msu:MS2043"/>
<dbReference type="eggNOG" id="COG0091">
    <property type="taxonomic scope" value="Bacteria"/>
</dbReference>
<dbReference type="HOGENOM" id="CLU_083987_3_3_6"/>
<dbReference type="OrthoDB" id="9805969at2"/>
<dbReference type="Proteomes" id="UP000000607">
    <property type="component" value="Chromosome"/>
</dbReference>
<dbReference type="GO" id="GO:0022625">
    <property type="term" value="C:cytosolic large ribosomal subunit"/>
    <property type="evidence" value="ECO:0007669"/>
    <property type="project" value="TreeGrafter"/>
</dbReference>
<dbReference type="GO" id="GO:0019843">
    <property type="term" value="F:rRNA binding"/>
    <property type="evidence" value="ECO:0007669"/>
    <property type="project" value="UniProtKB-UniRule"/>
</dbReference>
<dbReference type="GO" id="GO:0003735">
    <property type="term" value="F:structural constituent of ribosome"/>
    <property type="evidence" value="ECO:0007669"/>
    <property type="project" value="InterPro"/>
</dbReference>
<dbReference type="GO" id="GO:0006412">
    <property type="term" value="P:translation"/>
    <property type="evidence" value="ECO:0007669"/>
    <property type="project" value="UniProtKB-UniRule"/>
</dbReference>
<dbReference type="CDD" id="cd00336">
    <property type="entry name" value="Ribosomal_L22"/>
    <property type="match status" value="1"/>
</dbReference>
<dbReference type="FunFam" id="3.90.470.10:FF:000001">
    <property type="entry name" value="50S ribosomal protein L22"/>
    <property type="match status" value="1"/>
</dbReference>
<dbReference type="Gene3D" id="3.90.470.10">
    <property type="entry name" value="Ribosomal protein L22/L17"/>
    <property type="match status" value="1"/>
</dbReference>
<dbReference type="HAMAP" id="MF_01331_B">
    <property type="entry name" value="Ribosomal_uL22_B"/>
    <property type="match status" value="1"/>
</dbReference>
<dbReference type="InterPro" id="IPR001063">
    <property type="entry name" value="Ribosomal_uL22"/>
</dbReference>
<dbReference type="InterPro" id="IPR005727">
    <property type="entry name" value="Ribosomal_uL22_bac/chlpt-type"/>
</dbReference>
<dbReference type="InterPro" id="IPR047867">
    <property type="entry name" value="Ribosomal_uL22_bac/org-type"/>
</dbReference>
<dbReference type="InterPro" id="IPR018260">
    <property type="entry name" value="Ribosomal_uL22_CS"/>
</dbReference>
<dbReference type="InterPro" id="IPR036394">
    <property type="entry name" value="Ribosomal_uL22_sf"/>
</dbReference>
<dbReference type="NCBIfam" id="TIGR01044">
    <property type="entry name" value="rplV_bact"/>
    <property type="match status" value="1"/>
</dbReference>
<dbReference type="PANTHER" id="PTHR13501">
    <property type="entry name" value="CHLOROPLAST 50S RIBOSOMAL PROTEIN L22-RELATED"/>
    <property type="match status" value="1"/>
</dbReference>
<dbReference type="PANTHER" id="PTHR13501:SF8">
    <property type="entry name" value="LARGE RIBOSOMAL SUBUNIT PROTEIN UL22M"/>
    <property type="match status" value="1"/>
</dbReference>
<dbReference type="Pfam" id="PF00237">
    <property type="entry name" value="Ribosomal_L22"/>
    <property type="match status" value="1"/>
</dbReference>
<dbReference type="SUPFAM" id="SSF54843">
    <property type="entry name" value="Ribosomal protein L22"/>
    <property type="match status" value="1"/>
</dbReference>
<dbReference type="PROSITE" id="PS00464">
    <property type="entry name" value="RIBOSOMAL_L22"/>
    <property type="match status" value="1"/>
</dbReference>
<proteinExistence type="inferred from homology"/>
<reference key="1">
    <citation type="journal article" date="2004" name="Nat. Biotechnol.">
        <title>The genome sequence of the capnophilic rumen bacterium Mannheimia succiniciproducens.</title>
        <authorList>
            <person name="Hong S.H."/>
            <person name="Kim J.S."/>
            <person name="Lee S.Y."/>
            <person name="In Y.H."/>
            <person name="Choi S.S."/>
            <person name="Rih J.-K."/>
            <person name="Kim C.H."/>
            <person name="Jeong H."/>
            <person name="Hur C.G."/>
            <person name="Kim J.J."/>
        </authorList>
    </citation>
    <scope>NUCLEOTIDE SEQUENCE [LARGE SCALE GENOMIC DNA]</scope>
    <source>
        <strain>KCTC 0769BP / MBEL55E</strain>
    </source>
</reference>
<sequence>METIAKHRYARTSAQKARLVADLIRGKKVAAALEILTYTNKKAAALVKKVLESAIANAEHNDGADIDDLKVTKIFVDEGPSMKRVMPRAKGRADRILKRTSHITVVVSDR</sequence>
<comment type="function">
    <text evidence="1">This protein binds specifically to 23S rRNA; its binding is stimulated by other ribosomal proteins, e.g. L4, L17, and L20. It is important during the early stages of 50S assembly. It makes multiple contacts with different domains of the 23S rRNA in the assembled 50S subunit and ribosome (By similarity).</text>
</comment>
<comment type="function">
    <text evidence="1">The globular domain of the protein is located near the polypeptide exit tunnel on the outside of the subunit, while an extended beta-hairpin is found that lines the wall of the exit tunnel in the center of the 70S ribosome.</text>
</comment>
<comment type="subunit">
    <text evidence="1">Part of the 50S ribosomal subunit.</text>
</comment>
<comment type="similarity">
    <text evidence="1">Belongs to the universal ribosomal protein uL22 family.</text>
</comment>
<accession>Q65QW0</accession>